<reference key="1">
    <citation type="journal article" date="2000" name="Genome Res.">
        <title>Identification of novel human genes evolutionarily conserved in Caenorhabditis elegans by comparative proteomics.</title>
        <authorList>
            <person name="Lai C.-H."/>
            <person name="Chou C.-Y."/>
            <person name="Ch'ang L.-Y."/>
            <person name="Liu C.-S."/>
            <person name="Lin W.-C."/>
        </authorList>
    </citation>
    <scope>NUCLEOTIDE SEQUENCE [LARGE SCALE MRNA]</scope>
</reference>
<reference key="2">
    <citation type="submission" date="2003-02" db="EMBL/GenBank/DDBJ databases">
        <title>Full-length cDNA libraries and normalization.</title>
        <authorList>
            <person name="Li W.B."/>
            <person name="Gruber C."/>
            <person name="Jessee J."/>
            <person name="Polayes D."/>
        </authorList>
    </citation>
    <scope>NUCLEOTIDE SEQUENCE [LARGE SCALE MRNA]</scope>
    <source>
        <tissue>Neuroblastoma</tissue>
    </source>
</reference>
<reference key="3">
    <citation type="journal article" date="2003" name="Nature">
        <title>The DNA sequence and analysis of human chromosome 14.</title>
        <authorList>
            <person name="Heilig R."/>
            <person name="Eckenberg R."/>
            <person name="Petit J.-L."/>
            <person name="Fonknechten N."/>
            <person name="Da Silva C."/>
            <person name="Cattolico L."/>
            <person name="Levy M."/>
            <person name="Barbe V."/>
            <person name="De Berardinis V."/>
            <person name="Ureta-Vidal A."/>
            <person name="Pelletier E."/>
            <person name="Vico V."/>
            <person name="Anthouard V."/>
            <person name="Rowen L."/>
            <person name="Madan A."/>
            <person name="Qin S."/>
            <person name="Sun H."/>
            <person name="Du H."/>
            <person name="Pepin K."/>
            <person name="Artiguenave F."/>
            <person name="Robert C."/>
            <person name="Cruaud C."/>
            <person name="Bruels T."/>
            <person name="Jaillon O."/>
            <person name="Friedlander L."/>
            <person name="Samson G."/>
            <person name="Brottier P."/>
            <person name="Cure S."/>
            <person name="Segurens B."/>
            <person name="Aniere F."/>
            <person name="Samain S."/>
            <person name="Crespeau H."/>
            <person name="Abbasi N."/>
            <person name="Aiach N."/>
            <person name="Boscus D."/>
            <person name="Dickhoff R."/>
            <person name="Dors M."/>
            <person name="Dubois I."/>
            <person name="Friedman C."/>
            <person name="Gouyvenoux M."/>
            <person name="James R."/>
            <person name="Madan A."/>
            <person name="Mairey-Estrada B."/>
            <person name="Mangenot S."/>
            <person name="Martins N."/>
            <person name="Menard M."/>
            <person name="Oztas S."/>
            <person name="Ratcliffe A."/>
            <person name="Shaffer T."/>
            <person name="Trask B."/>
            <person name="Vacherie B."/>
            <person name="Bellemere C."/>
            <person name="Belser C."/>
            <person name="Besnard-Gonnet M."/>
            <person name="Bartol-Mavel D."/>
            <person name="Boutard M."/>
            <person name="Briez-Silla S."/>
            <person name="Combette S."/>
            <person name="Dufosse-Laurent V."/>
            <person name="Ferron C."/>
            <person name="Lechaplais C."/>
            <person name="Louesse C."/>
            <person name="Muselet D."/>
            <person name="Magdelenat G."/>
            <person name="Pateau E."/>
            <person name="Petit E."/>
            <person name="Sirvain-Trukniewicz P."/>
            <person name="Trybou A."/>
            <person name="Vega-Czarny N."/>
            <person name="Bataille E."/>
            <person name="Bluet E."/>
            <person name="Bordelais I."/>
            <person name="Dubois M."/>
            <person name="Dumont C."/>
            <person name="Guerin T."/>
            <person name="Haffray S."/>
            <person name="Hammadi R."/>
            <person name="Muanga J."/>
            <person name="Pellouin V."/>
            <person name="Robert D."/>
            <person name="Wunderle E."/>
            <person name="Gauguet G."/>
            <person name="Roy A."/>
            <person name="Sainte-Marthe L."/>
            <person name="Verdier J."/>
            <person name="Verdier-Discala C."/>
            <person name="Hillier L.W."/>
            <person name="Fulton L."/>
            <person name="McPherson J."/>
            <person name="Matsuda F."/>
            <person name="Wilson R."/>
            <person name="Scarpelli C."/>
            <person name="Gyapay G."/>
            <person name="Wincker P."/>
            <person name="Saurin W."/>
            <person name="Quetier F."/>
            <person name="Waterston R."/>
            <person name="Hood L."/>
            <person name="Weissenbach J."/>
        </authorList>
    </citation>
    <scope>NUCLEOTIDE SEQUENCE [LARGE SCALE GENOMIC DNA]</scope>
</reference>
<reference evidence="5 6 7" key="4">
    <citation type="journal article" date="2021" name="Science">
        <title>Nucleolar maturation of the human small subunit processome.</title>
        <authorList>
            <person name="Singh S."/>
            <person name="Vanden Broeck A."/>
            <person name="Miller L."/>
            <person name="Chaker-Margot M."/>
            <person name="Klinge S."/>
        </authorList>
    </citation>
    <scope>STRUCTURE BY ELECTRON MICROSCOPY (2.70 ANGSTROMS)</scope>
    <scope>FUNCTION</scope>
    <scope>SUBUNIT</scope>
    <scope>SUBCELLULAR LOCATION</scope>
</reference>
<accession>Q9Y324</accession>
<accession>Q86TW8</accession>
<accession>Q8TBL8</accession>
<sequence length="198" mass="23370">MGKQKKTRKYATMKRMLSLRDQRLKEKDRLKPKKKEKKDPSALKEREVPQHPSCLFFQYNTQLGPPYHILVDTNFINFSIKAKLDLVQSMMDCLYAKCIPCITDCVMAEIEKLGQKYRVALRIAKDPRFERLPCTHKGTYADDCLVQRVTQHKCYIVATVDRDLKRRIRKIPGVPIMYISNHRYNIERMPDDYGAPRF</sequence>
<comment type="function">
    <text evidence="2">Part of the small subunit (SSU) processome, first precursor of the small eukaryotic ribosomal subunit. During the assembly of the SSU processome in the nucleolus, many ribosome biogenesis factors, an RNA chaperone and ribosomal proteins associate with the nascent pre-rRNA and work in concert to generate RNA folding, modifications, rearrangements and cleavage as well as targeted degradation of pre-ribosomal RNA by the RNA exosome.</text>
</comment>
<comment type="subunit">
    <text evidence="2">Part of the small subunit (SSU) processome, composed of more than 70 proteins and the RNA chaperone small nucleolar RNA (snoRNA) U3.</text>
</comment>
<comment type="interaction">
    <interactant intactId="EBI-5455734">
        <id>Q9Y324</id>
    </interactant>
    <interactant intactId="EBI-711154">
        <id>Q9P287</id>
        <label>BCCIP</label>
    </interactant>
    <organismsDiffer>false</organismsDiffer>
    <experiments>3</experiments>
</comment>
<comment type="interaction">
    <interactant intactId="EBI-5455734">
        <id>Q9Y324</id>
    </interactant>
    <interactant intactId="EBI-12162209">
        <id>Q5MJ68</id>
        <label>SPDYC</label>
    </interactant>
    <organismsDiffer>false</organismsDiffer>
    <experiments>3</experiments>
</comment>
<comment type="subcellular location">
    <subcellularLocation>
        <location evidence="2">Nucleus</location>
        <location evidence="2">Nucleolus</location>
    </subcellularLocation>
</comment>
<comment type="similarity">
    <text evidence="3">Belongs to the UTP23/FCF1 family. FCF1 subfamily.</text>
</comment>
<comment type="sequence caution" evidence="3">
    <conflict type="erroneous initiation">
        <sequence resource="EMBL-CDS" id="CAD62599"/>
    </conflict>
</comment>
<gene>
    <name evidence="4" type="primary">FCF1</name>
    <name type="synonym">C14orf111</name>
    <name type="ORF">CGI-35</name>
</gene>
<dbReference type="EMBL" id="AF132969">
    <property type="protein sequence ID" value="AAD27744.1"/>
    <property type="molecule type" value="mRNA"/>
</dbReference>
<dbReference type="EMBL" id="BX248271">
    <property type="protein sequence ID" value="CAD62599.1"/>
    <property type="status" value="ALT_INIT"/>
    <property type="molecule type" value="mRNA"/>
</dbReference>
<dbReference type="EMBL" id="AC007956">
    <property type="status" value="NOT_ANNOTATED_CDS"/>
    <property type="molecule type" value="Genomic_DNA"/>
</dbReference>
<dbReference type="CCDS" id="CCDS9832.1"/>
<dbReference type="RefSeq" id="NP_057046.1">
    <property type="nucleotide sequence ID" value="NM_015962.5"/>
</dbReference>
<dbReference type="PDB" id="7MQ8">
    <property type="method" value="EM"/>
    <property type="resolution" value="3.60 A"/>
    <property type="chains" value="SL=1-198"/>
</dbReference>
<dbReference type="PDB" id="7MQ9">
    <property type="method" value="EM"/>
    <property type="resolution" value="3.87 A"/>
    <property type="chains" value="SL=1-198"/>
</dbReference>
<dbReference type="PDB" id="7MQA">
    <property type="method" value="EM"/>
    <property type="resolution" value="2.70 A"/>
    <property type="chains" value="SL=1-198"/>
</dbReference>
<dbReference type="PDBsum" id="7MQ8"/>
<dbReference type="PDBsum" id="7MQ9"/>
<dbReference type="PDBsum" id="7MQA"/>
<dbReference type="EMDB" id="EMD-23936"/>
<dbReference type="EMDB" id="EMD-23937"/>
<dbReference type="EMDB" id="EMD-23938"/>
<dbReference type="SMR" id="Q9Y324"/>
<dbReference type="BioGRID" id="119268">
    <property type="interactions" value="103"/>
</dbReference>
<dbReference type="ComplexPortal" id="CPX-2511">
    <property type="entry name" value="Small ribosomal subunit processome"/>
</dbReference>
<dbReference type="FunCoup" id="Q9Y324">
    <property type="interactions" value="3127"/>
</dbReference>
<dbReference type="IntAct" id="Q9Y324">
    <property type="interactions" value="76"/>
</dbReference>
<dbReference type="STRING" id="9606.ENSP00000344393"/>
<dbReference type="iPTMnet" id="Q9Y324"/>
<dbReference type="PhosphoSitePlus" id="Q9Y324"/>
<dbReference type="SwissPalm" id="Q9Y324"/>
<dbReference type="BioMuta" id="FCF1"/>
<dbReference type="DMDM" id="34582346"/>
<dbReference type="jPOST" id="Q9Y324"/>
<dbReference type="MassIVE" id="Q9Y324"/>
<dbReference type="PaxDb" id="9606-ENSP00000344393"/>
<dbReference type="PeptideAtlas" id="Q9Y324"/>
<dbReference type="ProteomicsDB" id="85964"/>
<dbReference type="Pumba" id="Q9Y324"/>
<dbReference type="Antibodypedia" id="50547">
    <property type="antibodies" value="13 antibodies from 11 providers"/>
</dbReference>
<dbReference type="DNASU" id="51077"/>
<dbReference type="Ensembl" id="ENST00000341162.8">
    <property type="protein sequence ID" value="ENSP00000344393.4"/>
    <property type="gene ID" value="ENSG00000119616.11"/>
</dbReference>
<dbReference type="GeneID" id="51077"/>
<dbReference type="KEGG" id="hsa:51077"/>
<dbReference type="MANE-Select" id="ENST00000341162.8">
    <property type="protein sequence ID" value="ENSP00000344393.4"/>
    <property type="RefSeq nucleotide sequence ID" value="NM_015962.5"/>
    <property type="RefSeq protein sequence ID" value="NP_057046.1"/>
</dbReference>
<dbReference type="UCSC" id="uc001xqh.4">
    <property type="organism name" value="human"/>
</dbReference>
<dbReference type="AGR" id="HGNC:20220"/>
<dbReference type="CTD" id="51077"/>
<dbReference type="DisGeNET" id="51077"/>
<dbReference type="GeneCards" id="FCF1"/>
<dbReference type="HGNC" id="HGNC:20220">
    <property type="gene designation" value="FCF1"/>
</dbReference>
<dbReference type="HPA" id="ENSG00000119616">
    <property type="expression patterns" value="Low tissue specificity"/>
</dbReference>
<dbReference type="neXtProt" id="NX_Q9Y324"/>
<dbReference type="OpenTargets" id="ENSG00000119616"/>
<dbReference type="PharmGKB" id="PA162388159"/>
<dbReference type="VEuPathDB" id="HostDB:ENSG00000119616"/>
<dbReference type="eggNOG" id="KOG3165">
    <property type="taxonomic scope" value="Eukaryota"/>
</dbReference>
<dbReference type="GeneTree" id="ENSGT00940000153117"/>
<dbReference type="InParanoid" id="Q9Y324"/>
<dbReference type="OMA" id="GMMDCLL"/>
<dbReference type="OrthoDB" id="76105at2759"/>
<dbReference type="PAN-GO" id="Q9Y324">
    <property type="GO annotations" value="2 GO annotations based on evolutionary models"/>
</dbReference>
<dbReference type="PhylomeDB" id="Q9Y324"/>
<dbReference type="TreeFam" id="TF314992"/>
<dbReference type="PathwayCommons" id="Q9Y324"/>
<dbReference type="Reactome" id="R-HSA-6790901">
    <property type="pathway name" value="rRNA modification in the nucleus and cytosol"/>
</dbReference>
<dbReference type="Reactome" id="R-HSA-6791226">
    <property type="pathway name" value="Major pathway of rRNA processing in the nucleolus and cytosol"/>
</dbReference>
<dbReference type="SignaLink" id="Q9Y324"/>
<dbReference type="BioGRID-ORCS" id="51077">
    <property type="hits" value="756 hits in 1128 CRISPR screens"/>
</dbReference>
<dbReference type="CD-CODE" id="91857CE7">
    <property type="entry name" value="Nucleolus"/>
</dbReference>
<dbReference type="ChiTaRS" id="FCF1">
    <property type="organism name" value="human"/>
</dbReference>
<dbReference type="GeneWiki" id="FCF1"/>
<dbReference type="GenomeRNAi" id="51077"/>
<dbReference type="Pharos" id="Q9Y324">
    <property type="development level" value="Tdark"/>
</dbReference>
<dbReference type="PRO" id="PR:Q9Y324"/>
<dbReference type="Proteomes" id="UP000005640">
    <property type="component" value="Chromosome 14"/>
</dbReference>
<dbReference type="RNAct" id="Q9Y324">
    <property type="molecule type" value="protein"/>
</dbReference>
<dbReference type="Bgee" id="ENSG00000119616">
    <property type="expression patterns" value="Expressed in germinal epithelium of ovary and 205 other cell types or tissues"/>
</dbReference>
<dbReference type="ExpressionAtlas" id="Q9Y324">
    <property type="expression patterns" value="baseline and differential"/>
</dbReference>
<dbReference type="GO" id="GO:0005730">
    <property type="term" value="C:nucleolus"/>
    <property type="evidence" value="ECO:0000318"/>
    <property type="project" value="GO_Central"/>
</dbReference>
<dbReference type="GO" id="GO:0005654">
    <property type="term" value="C:nucleoplasm"/>
    <property type="evidence" value="ECO:0000304"/>
    <property type="project" value="Reactome"/>
</dbReference>
<dbReference type="GO" id="GO:0032040">
    <property type="term" value="C:small-subunit processome"/>
    <property type="evidence" value="ECO:0000314"/>
    <property type="project" value="UniProtKB"/>
</dbReference>
<dbReference type="GO" id="GO:0003723">
    <property type="term" value="F:RNA binding"/>
    <property type="evidence" value="ECO:0007005"/>
    <property type="project" value="UniProtKB"/>
</dbReference>
<dbReference type="GO" id="GO:0000480">
    <property type="term" value="P:endonucleolytic cleavage in 5'-ETS of tricistronic rRNA transcript (SSU-rRNA, 5.8S rRNA, LSU-rRNA)"/>
    <property type="evidence" value="ECO:0007669"/>
    <property type="project" value="Ensembl"/>
</dbReference>
<dbReference type="GO" id="GO:0000447">
    <property type="term" value="P:endonucleolytic cleavage in ITS1 to separate SSU-rRNA from 5.8S rRNA and LSU-rRNA from tricistronic rRNA transcript (SSU-rRNA, 5.8S rRNA, LSU-rRNA)"/>
    <property type="evidence" value="ECO:0007669"/>
    <property type="project" value="Ensembl"/>
</dbReference>
<dbReference type="GO" id="GO:0042274">
    <property type="term" value="P:ribosomal small subunit biogenesis"/>
    <property type="evidence" value="ECO:0000314"/>
    <property type="project" value="UniProtKB"/>
</dbReference>
<dbReference type="CDD" id="cd09864">
    <property type="entry name" value="PIN_Fcf1-like"/>
    <property type="match status" value="1"/>
</dbReference>
<dbReference type="FunFam" id="3.40.50.1010:FF:000004">
    <property type="entry name" value="rRNA-processing protein FCF1 homolog"/>
    <property type="match status" value="1"/>
</dbReference>
<dbReference type="Gene3D" id="3.40.50.1010">
    <property type="entry name" value="5'-nuclease"/>
    <property type="match status" value="1"/>
</dbReference>
<dbReference type="InterPro" id="IPR006984">
    <property type="entry name" value="Fcf1/Utp23"/>
</dbReference>
<dbReference type="InterPro" id="IPR037503">
    <property type="entry name" value="Fcf1_PIN"/>
</dbReference>
<dbReference type="InterPro" id="IPR029060">
    <property type="entry name" value="PIN-like_dom_sf"/>
</dbReference>
<dbReference type="InterPro" id="IPR002716">
    <property type="entry name" value="PIN_dom"/>
</dbReference>
<dbReference type="PANTHER" id="PTHR12416">
    <property type="entry name" value="RRNA-PROCESSING PROTEIN UTP23 HOMOLOG"/>
    <property type="match status" value="1"/>
</dbReference>
<dbReference type="Pfam" id="PF04900">
    <property type="entry name" value="Fcf1"/>
    <property type="match status" value="1"/>
</dbReference>
<dbReference type="SMART" id="SM00670">
    <property type="entry name" value="PINc"/>
    <property type="match status" value="1"/>
</dbReference>
<dbReference type="SUPFAM" id="SSF88723">
    <property type="entry name" value="PIN domain-like"/>
    <property type="match status" value="1"/>
</dbReference>
<evidence type="ECO:0000256" key="1">
    <source>
        <dbReference type="SAM" id="MobiDB-lite"/>
    </source>
</evidence>
<evidence type="ECO:0000269" key="2">
    <source>
    </source>
</evidence>
<evidence type="ECO:0000305" key="3"/>
<evidence type="ECO:0000312" key="4">
    <source>
        <dbReference type="HGNC" id="HGNC:20220"/>
    </source>
</evidence>
<evidence type="ECO:0007744" key="5">
    <source>
        <dbReference type="PDB" id="7MQ8"/>
    </source>
</evidence>
<evidence type="ECO:0007744" key="6">
    <source>
        <dbReference type="PDB" id="7MQ9"/>
    </source>
</evidence>
<evidence type="ECO:0007744" key="7">
    <source>
        <dbReference type="PDB" id="7MQA"/>
    </source>
</evidence>
<organism>
    <name type="scientific">Homo sapiens</name>
    <name type="common">Human</name>
    <dbReference type="NCBI Taxonomy" id="9606"/>
    <lineage>
        <taxon>Eukaryota</taxon>
        <taxon>Metazoa</taxon>
        <taxon>Chordata</taxon>
        <taxon>Craniata</taxon>
        <taxon>Vertebrata</taxon>
        <taxon>Euteleostomi</taxon>
        <taxon>Mammalia</taxon>
        <taxon>Eutheria</taxon>
        <taxon>Euarchontoglires</taxon>
        <taxon>Primates</taxon>
        <taxon>Haplorrhini</taxon>
        <taxon>Catarrhini</taxon>
        <taxon>Hominidae</taxon>
        <taxon>Homo</taxon>
    </lineage>
</organism>
<feature type="chain" id="PRO_0000089920" description="rRNA-processing protein FCF1 homolog">
    <location>
        <begin position="1"/>
        <end position="198"/>
    </location>
</feature>
<feature type="domain" description="PINc">
    <location>
        <begin position="67"/>
        <end position="166"/>
    </location>
</feature>
<feature type="region of interest" description="Disordered" evidence="1">
    <location>
        <begin position="22"/>
        <end position="47"/>
    </location>
</feature>
<feature type="compositionally biased region" description="Basic and acidic residues" evidence="1">
    <location>
        <begin position="37"/>
        <end position="47"/>
    </location>
</feature>
<proteinExistence type="evidence at protein level"/>
<protein>
    <recommendedName>
        <fullName>rRNA-processing protein FCF1 homolog</fullName>
    </recommendedName>
</protein>
<name>FCF1_HUMAN</name>
<keyword id="KW-0002">3D-structure</keyword>
<keyword id="KW-0539">Nucleus</keyword>
<keyword id="KW-1267">Proteomics identification</keyword>
<keyword id="KW-1185">Reference proteome</keyword>
<keyword id="KW-0690">Ribosome biogenesis</keyword>
<keyword id="KW-0698">rRNA processing</keyword>